<organism>
    <name type="scientific">Arabidopsis thaliana</name>
    <name type="common">Mouse-ear cress</name>
    <dbReference type="NCBI Taxonomy" id="3702"/>
    <lineage>
        <taxon>Eukaryota</taxon>
        <taxon>Viridiplantae</taxon>
        <taxon>Streptophyta</taxon>
        <taxon>Embryophyta</taxon>
        <taxon>Tracheophyta</taxon>
        <taxon>Spermatophyta</taxon>
        <taxon>Magnoliopsida</taxon>
        <taxon>eudicotyledons</taxon>
        <taxon>Gunneridae</taxon>
        <taxon>Pentapetalae</taxon>
        <taxon>rosids</taxon>
        <taxon>malvids</taxon>
        <taxon>Brassicales</taxon>
        <taxon>Brassicaceae</taxon>
        <taxon>Camelineae</taxon>
        <taxon>Arabidopsis</taxon>
    </lineage>
</organism>
<proteinExistence type="inferred from homology"/>
<name>C71AR_ARATH</name>
<keyword id="KW-0349">Heme</keyword>
<keyword id="KW-0408">Iron</keyword>
<keyword id="KW-0472">Membrane</keyword>
<keyword id="KW-0479">Metal-binding</keyword>
<keyword id="KW-0503">Monooxygenase</keyword>
<keyword id="KW-0560">Oxidoreductase</keyword>
<keyword id="KW-1185">Reference proteome</keyword>
<keyword id="KW-0812">Transmembrane</keyword>
<keyword id="KW-1133">Transmembrane helix</keyword>
<sequence length="499" mass="57087">MEMILISLCLTTLLAFLFLKPLLKRITTTKPKLPPSPWRLPVIGNLHQLGPNPHRYLHSLSLRYGPLMLLHFGRVPVLVVSCPDVTNDIMKTHDLKFANRPKSKAINIFMEGGRDIIFGPYGEDWKSMKSLGVVHLLNNKMVRSFENLREEEIKVMTEKLEEASSSSSSVNLSKLLMTLTNDIICRITLGRKYNEEEGGIDIKNLVMTSSEFFGKFFFGDFIPSLAWIDWISGIDDKMKDINNKLDCFLDSMVQEHVDADHKEPSDFIDMLLLIQKDKTKRFKFDRSDLILILKDMFFSGTATTASQLEWTMTELMRHPECMKKLQDEINSFSTHNLNVTEKEVEKMNYLHCVIKEGLRLHPSGPLLFRLPSEDVQLKGYDISAGTHVIINAWALQRNPAIWGLDANEYRPERHFWYEFGFQRTDSKFVPFGAGRRLCPGIGFSLVLSKLALANLVKRFNWRLKVGPVGDDKPDLAEASGIDVCRKFPLIVFPSIAHTH</sequence>
<dbReference type="EC" id="1.14.-.-"/>
<dbReference type="EMBL" id="AL022224">
    <property type="protein sequence ID" value="CAA18249.1"/>
    <property type="status" value="ALT_SEQ"/>
    <property type="molecule type" value="Genomic_DNA"/>
</dbReference>
<dbReference type="EMBL" id="AL161552">
    <property type="protein sequence ID" value="CAB79024.1"/>
    <property type="status" value="ALT_SEQ"/>
    <property type="molecule type" value="Genomic_DNA"/>
</dbReference>
<dbReference type="EMBL" id="CP002687">
    <property type="protein sequence ID" value="AEE84289.1"/>
    <property type="status" value="ALT_SEQ"/>
    <property type="molecule type" value="Genomic_DNA"/>
</dbReference>
<dbReference type="RefSeq" id="NP_193757.3">
    <property type="nucleotide sequence ID" value="NM_118143.4"/>
</dbReference>
<dbReference type="SMR" id="O65438"/>
<dbReference type="FunCoup" id="O65438">
    <property type="interactions" value="183"/>
</dbReference>
<dbReference type="STRING" id="3702.O65438"/>
<dbReference type="PaxDb" id="3702-AT4G20240.1"/>
<dbReference type="ProteomicsDB" id="223853"/>
<dbReference type="GeneID" id="827771"/>
<dbReference type="KEGG" id="ath:AT4G20240"/>
<dbReference type="Araport" id="AT4G20240"/>
<dbReference type="TAIR" id="AT4G20240">
    <property type="gene designation" value="CYP71A27"/>
</dbReference>
<dbReference type="eggNOG" id="KOG0156">
    <property type="taxonomic scope" value="Eukaryota"/>
</dbReference>
<dbReference type="HOGENOM" id="CLU_001570_4_1_1"/>
<dbReference type="InParanoid" id="O65438"/>
<dbReference type="PhylomeDB" id="O65438"/>
<dbReference type="BioCyc" id="ARA:AT4G20240-MONOMER"/>
<dbReference type="PRO" id="PR:O65438"/>
<dbReference type="Proteomes" id="UP000006548">
    <property type="component" value="Chromosome 4"/>
</dbReference>
<dbReference type="ExpressionAtlas" id="O65438">
    <property type="expression patterns" value="baseline and differential"/>
</dbReference>
<dbReference type="GO" id="GO:0016020">
    <property type="term" value="C:membrane"/>
    <property type="evidence" value="ECO:0007669"/>
    <property type="project" value="UniProtKB-SubCell"/>
</dbReference>
<dbReference type="GO" id="GO:0020037">
    <property type="term" value="F:heme binding"/>
    <property type="evidence" value="ECO:0007669"/>
    <property type="project" value="InterPro"/>
</dbReference>
<dbReference type="GO" id="GO:0005506">
    <property type="term" value="F:iron ion binding"/>
    <property type="evidence" value="ECO:0007669"/>
    <property type="project" value="InterPro"/>
</dbReference>
<dbReference type="GO" id="GO:0004497">
    <property type="term" value="F:monooxygenase activity"/>
    <property type="evidence" value="ECO:0007669"/>
    <property type="project" value="UniProtKB-KW"/>
</dbReference>
<dbReference type="GO" id="GO:0016705">
    <property type="term" value="F:oxidoreductase activity, acting on paired donors, with incorporation or reduction of molecular oxygen"/>
    <property type="evidence" value="ECO:0007669"/>
    <property type="project" value="InterPro"/>
</dbReference>
<dbReference type="CDD" id="cd11072">
    <property type="entry name" value="CYP71-like"/>
    <property type="match status" value="1"/>
</dbReference>
<dbReference type="FunFam" id="1.10.630.10:FF:000011">
    <property type="entry name" value="Cytochrome P450 83B1"/>
    <property type="match status" value="1"/>
</dbReference>
<dbReference type="Gene3D" id="1.10.630.10">
    <property type="entry name" value="Cytochrome P450"/>
    <property type="match status" value="1"/>
</dbReference>
<dbReference type="InterPro" id="IPR001128">
    <property type="entry name" value="Cyt_P450"/>
</dbReference>
<dbReference type="InterPro" id="IPR017972">
    <property type="entry name" value="Cyt_P450_CS"/>
</dbReference>
<dbReference type="InterPro" id="IPR002401">
    <property type="entry name" value="Cyt_P450_E_grp-I"/>
</dbReference>
<dbReference type="InterPro" id="IPR036396">
    <property type="entry name" value="Cyt_P450_sf"/>
</dbReference>
<dbReference type="PANTHER" id="PTHR47955:SF15">
    <property type="entry name" value="CYTOCHROME P450 71A2-LIKE"/>
    <property type="match status" value="1"/>
</dbReference>
<dbReference type="PANTHER" id="PTHR47955">
    <property type="entry name" value="CYTOCHROME P450 FAMILY 71 PROTEIN"/>
    <property type="match status" value="1"/>
</dbReference>
<dbReference type="Pfam" id="PF00067">
    <property type="entry name" value="p450"/>
    <property type="match status" value="1"/>
</dbReference>
<dbReference type="PRINTS" id="PR00463">
    <property type="entry name" value="EP450I"/>
</dbReference>
<dbReference type="PRINTS" id="PR00385">
    <property type="entry name" value="P450"/>
</dbReference>
<dbReference type="SUPFAM" id="SSF48264">
    <property type="entry name" value="Cytochrome P450"/>
    <property type="match status" value="1"/>
</dbReference>
<dbReference type="PROSITE" id="PS00086">
    <property type="entry name" value="CYTOCHROME_P450"/>
    <property type="match status" value="1"/>
</dbReference>
<accession>O65438</accession>
<accession>F4JUT2</accession>
<feature type="chain" id="PRO_0000052077" description="Cytochrome P450 71A27">
    <location>
        <begin position="1"/>
        <end position="499"/>
    </location>
</feature>
<feature type="transmembrane region" description="Helical" evidence="2">
    <location>
        <begin position="3"/>
        <end position="23"/>
    </location>
</feature>
<feature type="binding site" description="axial binding residue" evidence="1">
    <location>
        <position position="438"/>
    </location>
    <ligand>
        <name>heme</name>
        <dbReference type="ChEBI" id="CHEBI:30413"/>
    </ligand>
    <ligandPart>
        <name>Fe</name>
        <dbReference type="ChEBI" id="CHEBI:18248"/>
    </ligandPart>
</feature>
<protein>
    <recommendedName>
        <fullName>Cytochrome P450 71A27</fullName>
        <ecNumber>1.14.-.-</ecNumber>
    </recommendedName>
</protein>
<comment type="cofactor">
    <cofactor evidence="1">
        <name>heme</name>
        <dbReference type="ChEBI" id="CHEBI:30413"/>
    </cofactor>
</comment>
<comment type="subcellular location">
    <subcellularLocation>
        <location evidence="3">Membrane</location>
        <topology evidence="3">Single-pass membrane protein</topology>
    </subcellularLocation>
</comment>
<comment type="similarity">
    <text evidence="3">Belongs to the cytochrome P450 family.</text>
</comment>
<comment type="sequence caution" evidence="3">
    <conflict type="erroneous gene model prediction">
        <sequence resource="EMBL-CDS" id="AEE84289"/>
    </conflict>
</comment>
<comment type="sequence caution" evidence="3">
    <conflict type="frameshift">
        <sequence resource="EMBL-CDS" id="AEE84289"/>
    </conflict>
</comment>
<comment type="sequence caution" evidence="3">
    <conflict type="erroneous gene model prediction">
        <sequence resource="EMBL-CDS" id="CAA18249"/>
    </conflict>
    <text>The predicted gene has been split into 2 genes: At4g20235 and At4g20240.</text>
</comment>
<comment type="sequence caution" evidence="3">
    <conflict type="frameshift">
        <sequence resource="EMBL-CDS" id="CAA18249"/>
    </conflict>
</comment>
<comment type="sequence caution" evidence="3">
    <conflict type="erroneous gene model prediction">
        <sequence resource="EMBL-CDS" id="CAB79024"/>
    </conflict>
    <text>The predicted gene has been split into 2 genes: At4g20235 and At4g20240.</text>
</comment>
<comment type="sequence caution" evidence="3">
    <conflict type="frameshift">
        <sequence resource="EMBL-CDS" id="CAB79024"/>
    </conflict>
</comment>
<evidence type="ECO:0000250" key="1"/>
<evidence type="ECO:0000255" key="2"/>
<evidence type="ECO:0000305" key="3"/>
<reference key="1">
    <citation type="journal article" date="1999" name="Nature">
        <title>Sequence and analysis of chromosome 4 of the plant Arabidopsis thaliana.</title>
        <authorList>
            <person name="Mayer K.F.X."/>
            <person name="Schueller C."/>
            <person name="Wambutt R."/>
            <person name="Murphy G."/>
            <person name="Volckaert G."/>
            <person name="Pohl T."/>
            <person name="Duesterhoeft A."/>
            <person name="Stiekema W."/>
            <person name="Entian K.-D."/>
            <person name="Terryn N."/>
            <person name="Harris B."/>
            <person name="Ansorge W."/>
            <person name="Brandt P."/>
            <person name="Grivell L.A."/>
            <person name="Rieger M."/>
            <person name="Weichselgartner M."/>
            <person name="de Simone V."/>
            <person name="Obermaier B."/>
            <person name="Mache R."/>
            <person name="Mueller M."/>
            <person name="Kreis M."/>
            <person name="Delseny M."/>
            <person name="Puigdomenech P."/>
            <person name="Watson M."/>
            <person name="Schmidtheini T."/>
            <person name="Reichert B."/>
            <person name="Portetelle D."/>
            <person name="Perez-Alonso M."/>
            <person name="Boutry M."/>
            <person name="Bancroft I."/>
            <person name="Vos P."/>
            <person name="Hoheisel J."/>
            <person name="Zimmermann W."/>
            <person name="Wedler H."/>
            <person name="Ridley P."/>
            <person name="Langham S.-A."/>
            <person name="McCullagh B."/>
            <person name="Bilham L."/>
            <person name="Robben J."/>
            <person name="van der Schueren J."/>
            <person name="Grymonprez B."/>
            <person name="Chuang Y.-J."/>
            <person name="Vandenbussche F."/>
            <person name="Braeken M."/>
            <person name="Weltjens I."/>
            <person name="Voet M."/>
            <person name="Bastiaens I."/>
            <person name="Aert R."/>
            <person name="Defoor E."/>
            <person name="Weitzenegger T."/>
            <person name="Bothe G."/>
            <person name="Ramsperger U."/>
            <person name="Hilbert H."/>
            <person name="Braun M."/>
            <person name="Holzer E."/>
            <person name="Brandt A."/>
            <person name="Peters S."/>
            <person name="van Staveren M."/>
            <person name="Dirkse W."/>
            <person name="Mooijman P."/>
            <person name="Klein Lankhorst R."/>
            <person name="Rose M."/>
            <person name="Hauf J."/>
            <person name="Koetter P."/>
            <person name="Berneiser S."/>
            <person name="Hempel S."/>
            <person name="Feldpausch M."/>
            <person name="Lamberth S."/>
            <person name="Van den Daele H."/>
            <person name="De Keyser A."/>
            <person name="Buysshaert C."/>
            <person name="Gielen J."/>
            <person name="Villarroel R."/>
            <person name="De Clercq R."/>
            <person name="van Montagu M."/>
            <person name="Rogers J."/>
            <person name="Cronin A."/>
            <person name="Quail M.A."/>
            <person name="Bray-Allen S."/>
            <person name="Clark L."/>
            <person name="Doggett J."/>
            <person name="Hall S."/>
            <person name="Kay M."/>
            <person name="Lennard N."/>
            <person name="McLay K."/>
            <person name="Mayes R."/>
            <person name="Pettett A."/>
            <person name="Rajandream M.A."/>
            <person name="Lyne M."/>
            <person name="Benes V."/>
            <person name="Rechmann S."/>
            <person name="Borkova D."/>
            <person name="Bloecker H."/>
            <person name="Scharfe M."/>
            <person name="Grimm M."/>
            <person name="Loehnert T.-H."/>
            <person name="Dose S."/>
            <person name="de Haan M."/>
            <person name="Maarse A.C."/>
            <person name="Schaefer M."/>
            <person name="Mueller-Auer S."/>
            <person name="Gabel C."/>
            <person name="Fuchs M."/>
            <person name="Fartmann B."/>
            <person name="Granderath K."/>
            <person name="Dauner D."/>
            <person name="Herzl A."/>
            <person name="Neumann S."/>
            <person name="Argiriou A."/>
            <person name="Vitale D."/>
            <person name="Liguori R."/>
            <person name="Piravandi E."/>
            <person name="Massenet O."/>
            <person name="Quigley F."/>
            <person name="Clabauld G."/>
            <person name="Muendlein A."/>
            <person name="Felber R."/>
            <person name="Schnabl S."/>
            <person name="Hiller R."/>
            <person name="Schmidt W."/>
            <person name="Lecharny A."/>
            <person name="Aubourg S."/>
            <person name="Chefdor F."/>
            <person name="Cooke R."/>
            <person name="Berger C."/>
            <person name="Monfort A."/>
            <person name="Casacuberta E."/>
            <person name="Gibbons T."/>
            <person name="Weber N."/>
            <person name="Vandenbol M."/>
            <person name="Bargues M."/>
            <person name="Terol J."/>
            <person name="Torres A."/>
            <person name="Perez-Perez A."/>
            <person name="Purnelle B."/>
            <person name="Bent E."/>
            <person name="Johnson S."/>
            <person name="Tacon D."/>
            <person name="Jesse T."/>
            <person name="Heijnen L."/>
            <person name="Schwarz S."/>
            <person name="Scholler P."/>
            <person name="Heber S."/>
            <person name="Francs P."/>
            <person name="Bielke C."/>
            <person name="Frishman D."/>
            <person name="Haase D."/>
            <person name="Lemcke K."/>
            <person name="Mewes H.-W."/>
            <person name="Stocker S."/>
            <person name="Zaccaria P."/>
            <person name="Bevan M."/>
            <person name="Wilson R.K."/>
            <person name="de la Bastide M."/>
            <person name="Habermann K."/>
            <person name="Parnell L."/>
            <person name="Dedhia N."/>
            <person name="Gnoj L."/>
            <person name="Schutz K."/>
            <person name="Huang E."/>
            <person name="Spiegel L."/>
            <person name="Sekhon M."/>
            <person name="Murray J."/>
            <person name="Sheet P."/>
            <person name="Cordes M."/>
            <person name="Abu-Threideh J."/>
            <person name="Stoneking T."/>
            <person name="Kalicki J."/>
            <person name="Graves T."/>
            <person name="Harmon G."/>
            <person name="Edwards J."/>
            <person name="Latreille P."/>
            <person name="Courtney L."/>
            <person name="Cloud J."/>
            <person name="Abbott A."/>
            <person name="Scott K."/>
            <person name="Johnson D."/>
            <person name="Minx P."/>
            <person name="Bentley D."/>
            <person name="Fulton B."/>
            <person name="Miller N."/>
            <person name="Greco T."/>
            <person name="Kemp K."/>
            <person name="Kramer J."/>
            <person name="Fulton L."/>
            <person name="Mardis E."/>
            <person name="Dante M."/>
            <person name="Pepin K."/>
            <person name="Hillier L.W."/>
            <person name="Nelson J."/>
            <person name="Spieth J."/>
            <person name="Ryan E."/>
            <person name="Andrews S."/>
            <person name="Geisel C."/>
            <person name="Layman D."/>
            <person name="Du H."/>
            <person name="Ali J."/>
            <person name="Berghoff A."/>
            <person name="Jones K."/>
            <person name="Drone K."/>
            <person name="Cotton M."/>
            <person name="Joshu C."/>
            <person name="Antonoiu B."/>
            <person name="Zidanic M."/>
            <person name="Strong C."/>
            <person name="Sun H."/>
            <person name="Lamar B."/>
            <person name="Yordan C."/>
            <person name="Ma P."/>
            <person name="Zhong J."/>
            <person name="Preston R."/>
            <person name="Vil D."/>
            <person name="Shekher M."/>
            <person name="Matero A."/>
            <person name="Shah R."/>
            <person name="Swaby I.K."/>
            <person name="O'Shaughnessy A."/>
            <person name="Rodriguez M."/>
            <person name="Hoffman J."/>
            <person name="Till S."/>
            <person name="Granat S."/>
            <person name="Shohdy N."/>
            <person name="Hasegawa A."/>
            <person name="Hameed A."/>
            <person name="Lodhi M."/>
            <person name="Johnson A."/>
            <person name="Chen E."/>
            <person name="Marra M.A."/>
            <person name="Martienssen R."/>
            <person name="McCombie W.R."/>
        </authorList>
    </citation>
    <scope>NUCLEOTIDE SEQUENCE [LARGE SCALE GENOMIC DNA]</scope>
    <source>
        <strain>cv. Columbia</strain>
    </source>
</reference>
<reference key="2">
    <citation type="journal article" date="2017" name="Plant J.">
        <title>Araport11: a complete reannotation of the Arabidopsis thaliana reference genome.</title>
        <authorList>
            <person name="Cheng C.Y."/>
            <person name="Krishnakumar V."/>
            <person name="Chan A.P."/>
            <person name="Thibaud-Nissen F."/>
            <person name="Schobel S."/>
            <person name="Town C.D."/>
        </authorList>
    </citation>
    <scope>GENOME REANNOTATION</scope>
    <source>
        <strain>cv. Columbia</strain>
    </source>
</reference>
<reference key="3">
    <citation type="unpublished observations" date="2001-04">
        <authorList>
            <person name="Bak S."/>
            <person name="Paquette S."/>
        </authorList>
    </citation>
    <scope>CONCEPTUAL TRANSLATION</scope>
</reference>
<gene>
    <name type="primary">CYP71A27</name>
    <name type="ordered locus">At4g20240</name>
    <name type="ORF">F1C12.160</name>
</gene>